<sequence length="130" mass="15132">MKRRTARERAMQALYQMDITGELEPKVAVENTLDEGEETNEFLESLVVGFVENKEVIDEAIRQNLKKWKLERISIVDRSILRVAVYEMKYMEEIPHNVTINEAIEIAKTFGDEESRRFINGVLSNIKDTL</sequence>
<proteinExistence type="inferred from homology"/>
<name>NUSB_BACC3</name>
<evidence type="ECO:0000255" key="1">
    <source>
        <dbReference type="HAMAP-Rule" id="MF_00073"/>
    </source>
</evidence>
<reference key="1">
    <citation type="submission" date="2009-02" db="EMBL/GenBank/DDBJ databases">
        <title>Genome sequence of Bacillus cereus 03BB102.</title>
        <authorList>
            <person name="Dodson R.J."/>
            <person name="Jackson P."/>
            <person name="Munk A.C."/>
            <person name="Brettin T."/>
            <person name="Bruce D."/>
            <person name="Detter C."/>
            <person name="Tapia R."/>
            <person name="Han C."/>
            <person name="Sutton G."/>
            <person name="Sims D."/>
        </authorList>
    </citation>
    <scope>NUCLEOTIDE SEQUENCE [LARGE SCALE GENOMIC DNA]</scope>
    <source>
        <strain>03BB102</strain>
    </source>
</reference>
<organism>
    <name type="scientific">Bacillus cereus (strain 03BB102)</name>
    <dbReference type="NCBI Taxonomy" id="572264"/>
    <lineage>
        <taxon>Bacteria</taxon>
        <taxon>Bacillati</taxon>
        <taxon>Bacillota</taxon>
        <taxon>Bacilli</taxon>
        <taxon>Bacillales</taxon>
        <taxon>Bacillaceae</taxon>
        <taxon>Bacillus</taxon>
        <taxon>Bacillus cereus group</taxon>
    </lineage>
</organism>
<protein>
    <recommendedName>
        <fullName evidence="1">Transcription antitermination protein NusB</fullName>
    </recommendedName>
    <alternativeName>
        <fullName evidence="1">Antitermination factor NusB</fullName>
    </alternativeName>
</protein>
<accession>C1ERQ5</accession>
<comment type="function">
    <text evidence="1">Involved in transcription antitermination. Required for transcription of ribosomal RNA (rRNA) genes. Binds specifically to the boxA antiterminator sequence of the ribosomal RNA (rrn) operons.</text>
</comment>
<comment type="similarity">
    <text evidence="1">Belongs to the NusB family.</text>
</comment>
<keyword id="KW-0694">RNA-binding</keyword>
<keyword id="KW-0804">Transcription</keyword>
<keyword id="KW-0889">Transcription antitermination</keyword>
<keyword id="KW-0805">Transcription regulation</keyword>
<dbReference type="EMBL" id="CP001407">
    <property type="protein sequence ID" value="ACO26207.1"/>
    <property type="molecule type" value="Genomic_DNA"/>
</dbReference>
<dbReference type="RefSeq" id="WP_000830249.1">
    <property type="nucleotide sequence ID" value="NZ_CP009318.1"/>
</dbReference>
<dbReference type="SMR" id="C1ERQ5"/>
<dbReference type="GeneID" id="93006920"/>
<dbReference type="KEGG" id="bcx:BCA_4291"/>
<dbReference type="PATRIC" id="fig|572264.18.peg.4242"/>
<dbReference type="Proteomes" id="UP000002210">
    <property type="component" value="Chromosome"/>
</dbReference>
<dbReference type="GO" id="GO:0005829">
    <property type="term" value="C:cytosol"/>
    <property type="evidence" value="ECO:0007669"/>
    <property type="project" value="TreeGrafter"/>
</dbReference>
<dbReference type="GO" id="GO:0003723">
    <property type="term" value="F:RNA binding"/>
    <property type="evidence" value="ECO:0007669"/>
    <property type="project" value="UniProtKB-UniRule"/>
</dbReference>
<dbReference type="GO" id="GO:0006353">
    <property type="term" value="P:DNA-templated transcription termination"/>
    <property type="evidence" value="ECO:0007669"/>
    <property type="project" value="UniProtKB-UniRule"/>
</dbReference>
<dbReference type="GO" id="GO:0031564">
    <property type="term" value="P:transcription antitermination"/>
    <property type="evidence" value="ECO:0007669"/>
    <property type="project" value="UniProtKB-KW"/>
</dbReference>
<dbReference type="CDD" id="cd00619">
    <property type="entry name" value="Terminator_NusB"/>
    <property type="match status" value="1"/>
</dbReference>
<dbReference type="FunFam" id="1.10.940.10:FF:000003">
    <property type="entry name" value="Transcription antitermination factor NusB"/>
    <property type="match status" value="1"/>
</dbReference>
<dbReference type="Gene3D" id="1.10.940.10">
    <property type="entry name" value="NusB-like"/>
    <property type="match status" value="1"/>
</dbReference>
<dbReference type="HAMAP" id="MF_00073">
    <property type="entry name" value="NusB"/>
    <property type="match status" value="1"/>
</dbReference>
<dbReference type="InterPro" id="IPR035926">
    <property type="entry name" value="NusB-like_sf"/>
</dbReference>
<dbReference type="InterPro" id="IPR011605">
    <property type="entry name" value="NusB_fam"/>
</dbReference>
<dbReference type="InterPro" id="IPR006027">
    <property type="entry name" value="NusB_RsmB_TIM44"/>
</dbReference>
<dbReference type="NCBIfam" id="TIGR01951">
    <property type="entry name" value="nusB"/>
    <property type="match status" value="1"/>
</dbReference>
<dbReference type="NCBIfam" id="NF001223">
    <property type="entry name" value="PRK00202.1-1"/>
    <property type="match status" value="1"/>
</dbReference>
<dbReference type="PANTHER" id="PTHR11078:SF3">
    <property type="entry name" value="ANTITERMINATION NUSB DOMAIN-CONTAINING PROTEIN"/>
    <property type="match status" value="1"/>
</dbReference>
<dbReference type="PANTHER" id="PTHR11078">
    <property type="entry name" value="N UTILIZATION SUBSTANCE PROTEIN B-RELATED"/>
    <property type="match status" value="1"/>
</dbReference>
<dbReference type="Pfam" id="PF01029">
    <property type="entry name" value="NusB"/>
    <property type="match status" value="1"/>
</dbReference>
<dbReference type="SUPFAM" id="SSF48013">
    <property type="entry name" value="NusB-like"/>
    <property type="match status" value="1"/>
</dbReference>
<feature type="chain" id="PRO_1000192414" description="Transcription antitermination protein NusB">
    <location>
        <begin position="1"/>
        <end position="130"/>
    </location>
</feature>
<gene>
    <name evidence="1" type="primary">nusB</name>
    <name type="ordered locus">BCA_4291</name>
</gene>